<proteinExistence type="evidence at protein level"/>
<keyword id="KW-0002">3D-structure</keyword>
<keyword id="KW-0131">Cell cycle</keyword>
<keyword id="KW-0132">Cell division</keyword>
<keyword id="KW-0342">GTP-binding</keyword>
<keyword id="KW-0460">Magnesium</keyword>
<keyword id="KW-0479">Metal-binding</keyword>
<keyword id="KW-0547">Nucleotide-binding</keyword>
<keyword id="KW-0717">Septation</keyword>
<reference key="1">
    <citation type="submission" date="2006-09" db="EMBL/GenBank/DDBJ databases">
        <authorList>
            <consortium name="The Klebsiella pneumonia Genome Sequencing Project"/>
            <person name="McClelland M."/>
            <person name="Sanderson E.K."/>
            <person name="Spieth J."/>
            <person name="Clifton W.S."/>
            <person name="Latreille P."/>
            <person name="Sabo A."/>
            <person name="Pepin K."/>
            <person name="Bhonagiri V."/>
            <person name="Porwollik S."/>
            <person name="Ali J."/>
            <person name="Wilson R.K."/>
        </authorList>
    </citation>
    <scope>NUCLEOTIDE SEQUENCE [LARGE SCALE GENOMIC DNA]</scope>
    <source>
        <strain>ATCC 700721 / MGH 78578</strain>
    </source>
</reference>
<comment type="function">
    <text evidence="1">Necessary for normal cell division and for the maintenance of normal septation.</text>
</comment>
<comment type="cofactor">
    <cofactor evidence="1">
        <name>Mg(2+)</name>
        <dbReference type="ChEBI" id="CHEBI:18420"/>
    </cofactor>
</comment>
<comment type="similarity">
    <text evidence="1">Belongs to the TRAFAC class TrmE-Era-EngA-EngB-Septin-like GTPase superfamily. EngB GTPase family.</text>
</comment>
<feature type="chain" id="PRO_1000005821" description="Probable GTP-binding protein EngB">
    <location>
        <begin position="1"/>
        <end position="210"/>
    </location>
</feature>
<feature type="domain" description="EngB-type G" evidence="1">
    <location>
        <begin position="25"/>
        <end position="199"/>
    </location>
</feature>
<feature type="binding site" evidence="1">
    <location>
        <begin position="33"/>
        <end position="40"/>
    </location>
    <ligand>
        <name>GTP</name>
        <dbReference type="ChEBI" id="CHEBI:37565"/>
    </ligand>
</feature>
<feature type="binding site" evidence="1">
    <location>
        <position position="40"/>
    </location>
    <ligand>
        <name>Mg(2+)</name>
        <dbReference type="ChEBI" id="CHEBI:18420"/>
    </ligand>
</feature>
<feature type="binding site" evidence="1">
    <location>
        <begin position="60"/>
        <end position="64"/>
    </location>
    <ligand>
        <name>GTP</name>
        <dbReference type="ChEBI" id="CHEBI:37565"/>
    </ligand>
</feature>
<feature type="binding site" evidence="1">
    <location>
        <position position="62"/>
    </location>
    <ligand>
        <name>Mg(2+)</name>
        <dbReference type="ChEBI" id="CHEBI:18420"/>
    </ligand>
</feature>
<feature type="binding site" evidence="1">
    <location>
        <begin position="78"/>
        <end position="81"/>
    </location>
    <ligand>
        <name>GTP</name>
        <dbReference type="ChEBI" id="CHEBI:37565"/>
    </ligand>
</feature>
<feature type="binding site" evidence="1">
    <location>
        <begin position="145"/>
        <end position="148"/>
    </location>
    <ligand>
        <name>GTP</name>
        <dbReference type="ChEBI" id="CHEBI:37565"/>
    </ligand>
</feature>
<feature type="binding site" evidence="1">
    <location>
        <begin position="178"/>
        <end position="180"/>
    </location>
    <ligand>
        <name>GTP</name>
        <dbReference type="ChEBI" id="CHEBI:37565"/>
    </ligand>
</feature>
<feature type="helix" evidence="2">
    <location>
        <begin position="6"/>
        <end position="8"/>
    </location>
</feature>
<feature type="strand" evidence="2">
    <location>
        <begin position="10"/>
        <end position="17"/>
    </location>
</feature>
<feature type="helix" evidence="2">
    <location>
        <begin position="18"/>
        <end position="20"/>
    </location>
</feature>
<feature type="strand" evidence="2">
    <location>
        <begin position="26"/>
        <end position="34"/>
    </location>
</feature>
<feature type="helix" evidence="2">
    <location>
        <begin position="39"/>
        <end position="47"/>
    </location>
</feature>
<feature type="turn" evidence="2">
    <location>
        <begin position="50"/>
        <end position="53"/>
    </location>
</feature>
<feature type="strand" evidence="2">
    <location>
        <begin position="65"/>
        <end position="71"/>
    </location>
</feature>
<feature type="strand" evidence="2">
    <location>
        <begin position="74"/>
        <end position="78"/>
    </location>
</feature>
<feature type="helix" evidence="2">
    <location>
        <begin position="89"/>
        <end position="105"/>
    </location>
</feature>
<feature type="strand" evidence="2">
    <location>
        <begin position="109"/>
        <end position="117"/>
    </location>
</feature>
<feature type="helix" evidence="2">
    <location>
        <begin position="126"/>
        <end position="135"/>
    </location>
</feature>
<feature type="strand" evidence="2">
    <location>
        <begin position="139"/>
        <end position="145"/>
    </location>
</feature>
<feature type="helix" evidence="2">
    <location>
        <begin position="147"/>
        <end position="149"/>
    </location>
</feature>
<feature type="helix" evidence="2">
    <location>
        <begin position="152"/>
        <end position="166"/>
    </location>
</feature>
<feature type="strand" evidence="2">
    <location>
        <begin position="169"/>
        <end position="171"/>
    </location>
</feature>
<feature type="strand" evidence="2">
    <location>
        <begin position="173"/>
        <end position="177"/>
    </location>
</feature>
<feature type="turn" evidence="2">
    <location>
        <begin position="180"/>
        <end position="183"/>
    </location>
</feature>
<feature type="helix" evidence="2">
    <location>
        <begin position="186"/>
        <end position="197"/>
    </location>
</feature>
<feature type="helix" evidence="2">
    <location>
        <begin position="202"/>
        <end position="204"/>
    </location>
</feature>
<name>ENGB_KLEP7</name>
<gene>
    <name evidence="1" type="primary">engB</name>
    <name type="ordered locus">KPN78578_41280</name>
    <name type="ORF">KPN_04173</name>
</gene>
<protein>
    <recommendedName>
        <fullName evidence="1">Probable GTP-binding protein EngB</fullName>
    </recommendedName>
</protein>
<accession>A6TG68</accession>
<organism>
    <name type="scientific">Klebsiella pneumoniae subsp. pneumoniae (strain ATCC 700721 / MGH 78578)</name>
    <dbReference type="NCBI Taxonomy" id="272620"/>
    <lineage>
        <taxon>Bacteria</taxon>
        <taxon>Pseudomonadati</taxon>
        <taxon>Pseudomonadota</taxon>
        <taxon>Gammaproteobacteria</taxon>
        <taxon>Enterobacterales</taxon>
        <taxon>Enterobacteriaceae</taxon>
        <taxon>Klebsiella/Raoultella group</taxon>
        <taxon>Klebsiella</taxon>
        <taxon>Klebsiella pneumoniae complex</taxon>
    </lineage>
</organism>
<sequence>MTNWNYQLTHFVTSAPDIRHLPADTGIEVAFAGRSNAGKSSALNTLTNQKNLARTSKTPGRTQLINLFEVAEGKRLVDLPGYGYAQVPEEMKIKWQRALGEYLEKRLCLKGLVVLMDIRHPLKDLDQQMIEWAVESDIQVLVLLTKADKLASGARKAQVNMVREAVLAFNGDVQVEPFSSLKKSGVDKLRQKLDSWFNEIPPQEAVEDAE</sequence>
<evidence type="ECO:0000255" key="1">
    <source>
        <dbReference type="HAMAP-Rule" id="MF_00321"/>
    </source>
</evidence>
<evidence type="ECO:0007829" key="2">
    <source>
        <dbReference type="PDB" id="7SZS"/>
    </source>
</evidence>
<dbReference type="EMBL" id="CP000647">
    <property type="protein sequence ID" value="ABR79552.1"/>
    <property type="molecule type" value="Genomic_DNA"/>
</dbReference>
<dbReference type="PDB" id="7SZS">
    <property type="method" value="X-ray"/>
    <property type="resolution" value="1.50 A"/>
    <property type="chains" value="A/B=2-210"/>
</dbReference>
<dbReference type="PDBsum" id="7SZS"/>
<dbReference type="SMR" id="A6TG68"/>
<dbReference type="STRING" id="272620.KPN_04173"/>
<dbReference type="PaxDb" id="272620-KPN_04173"/>
<dbReference type="EnsemblBacteria" id="ABR79552">
    <property type="protein sequence ID" value="ABR79552"/>
    <property type="gene ID" value="KPN_04173"/>
</dbReference>
<dbReference type="KEGG" id="kpn:KPN_04173"/>
<dbReference type="HOGENOM" id="CLU_033732_1_2_6"/>
<dbReference type="Proteomes" id="UP000000265">
    <property type="component" value="Chromosome"/>
</dbReference>
<dbReference type="GO" id="GO:0005829">
    <property type="term" value="C:cytosol"/>
    <property type="evidence" value="ECO:0007669"/>
    <property type="project" value="TreeGrafter"/>
</dbReference>
<dbReference type="GO" id="GO:0005525">
    <property type="term" value="F:GTP binding"/>
    <property type="evidence" value="ECO:0007669"/>
    <property type="project" value="UniProtKB-UniRule"/>
</dbReference>
<dbReference type="GO" id="GO:0046872">
    <property type="term" value="F:metal ion binding"/>
    <property type="evidence" value="ECO:0007669"/>
    <property type="project" value="UniProtKB-KW"/>
</dbReference>
<dbReference type="GO" id="GO:0000917">
    <property type="term" value="P:division septum assembly"/>
    <property type="evidence" value="ECO:0007669"/>
    <property type="project" value="UniProtKB-KW"/>
</dbReference>
<dbReference type="CDD" id="cd01876">
    <property type="entry name" value="YihA_EngB"/>
    <property type="match status" value="1"/>
</dbReference>
<dbReference type="FunFam" id="3.40.50.300:FF:000098">
    <property type="entry name" value="Probable GTP-binding protein EngB"/>
    <property type="match status" value="1"/>
</dbReference>
<dbReference type="Gene3D" id="3.40.50.300">
    <property type="entry name" value="P-loop containing nucleotide triphosphate hydrolases"/>
    <property type="match status" value="1"/>
</dbReference>
<dbReference type="HAMAP" id="MF_00321">
    <property type="entry name" value="GTPase_EngB"/>
    <property type="match status" value="1"/>
</dbReference>
<dbReference type="InterPro" id="IPR030393">
    <property type="entry name" value="G_ENGB_dom"/>
</dbReference>
<dbReference type="InterPro" id="IPR006073">
    <property type="entry name" value="GTP-bd"/>
</dbReference>
<dbReference type="InterPro" id="IPR019987">
    <property type="entry name" value="GTP-bd_ribosome_bio_YsxC"/>
</dbReference>
<dbReference type="InterPro" id="IPR027417">
    <property type="entry name" value="P-loop_NTPase"/>
</dbReference>
<dbReference type="NCBIfam" id="TIGR03598">
    <property type="entry name" value="GTPase_YsxC"/>
    <property type="match status" value="1"/>
</dbReference>
<dbReference type="PANTHER" id="PTHR11649:SF13">
    <property type="entry name" value="ENGB-TYPE G DOMAIN-CONTAINING PROTEIN"/>
    <property type="match status" value="1"/>
</dbReference>
<dbReference type="PANTHER" id="PTHR11649">
    <property type="entry name" value="MSS1/TRME-RELATED GTP-BINDING PROTEIN"/>
    <property type="match status" value="1"/>
</dbReference>
<dbReference type="Pfam" id="PF01926">
    <property type="entry name" value="MMR_HSR1"/>
    <property type="match status" value="1"/>
</dbReference>
<dbReference type="SUPFAM" id="SSF52540">
    <property type="entry name" value="P-loop containing nucleoside triphosphate hydrolases"/>
    <property type="match status" value="1"/>
</dbReference>
<dbReference type="PROSITE" id="PS51706">
    <property type="entry name" value="G_ENGB"/>
    <property type="match status" value="1"/>
</dbReference>